<protein>
    <recommendedName>
        <fullName>Alpha-amylase inhibitor/endochitinase</fullName>
        <ecNumber>3.2.1.14</ecNumber>
    </recommendedName>
</protein>
<proteinExistence type="evidence at protein level"/>
<keyword id="KW-0022">Alpha-amylase inhibitor</keyword>
<keyword id="KW-0119">Carbohydrate metabolism</keyword>
<keyword id="KW-0146">Chitin degradation</keyword>
<keyword id="KW-0147">Chitin-binding</keyword>
<keyword id="KW-0903">Direct protein sequencing</keyword>
<keyword id="KW-0326">Glycosidase</keyword>
<keyword id="KW-0378">Hydrolase</keyword>
<keyword id="KW-0624">Polysaccharide degradation</keyword>
<sequence length="133" mass="14305">CCSKFGYCGLTDAYNFYTGQLTSFAHVTHETGNNAYCDPSKTQKPCAAGKKYYGRGPIQISXNYNYGPAGRAIGMDGLGNPDRVAQDALDDYKTALXFLVNGEEAVPGLSAANAVSYYRQYCQQLGVDPGPNL</sequence>
<feature type="chain" id="PRO_0000124818" description="Alpha-amylase inhibitor/endochitinase">
    <location>
        <begin position="1" status="less than"/>
        <end position="133" status="greater than"/>
    </location>
</feature>
<feature type="active site" description="Proton donor" evidence="1">
    <location>
        <position position="30"/>
    </location>
</feature>
<feature type="sequence variant">
    <original>L</original>
    <variation>I</variation>
    <location>
        <position position="21"/>
    </location>
</feature>
<feature type="sequence variant">
    <original>L</original>
    <variation>I</variation>
    <location>
        <position position="89"/>
    </location>
</feature>
<feature type="sequence variant">
    <original>L</original>
    <variation>I</variation>
    <location>
        <position position="99"/>
    </location>
</feature>
<feature type="non-consecutive residues" evidence="2">
    <location>
        <begin position="14"/>
        <end position="15"/>
    </location>
</feature>
<feature type="non-consecutive residues" evidence="2">
    <location>
        <begin position="23"/>
        <end position="24"/>
    </location>
</feature>
<feature type="non-consecutive residues" evidence="2">
    <location>
        <begin position="32"/>
        <end position="33"/>
    </location>
</feature>
<feature type="non-consecutive residues" evidence="2">
    <location>
        <begin position="108"/>
        <end position="109"/>
    </location>
</feature>
<feature type="non-consecutive residues" evidence="2">
    <location>
        <begin position="114"/>
        <end position="115"/>
    </location>
</feature>
<feature type="non-terminal residue">
    <location>
        <position position="1"/>
    </location>
</feature>
<feature type="non-terminal residue">
    <location>
        <position position="133"/>
    </location>
</feature>
<evidence type="ECO:0000250" key="1">
    <source>
        <dbReference type="UniProtKB" id="P29022"/>
    </source>
</evidence>
<evidence type="ECO:0000305" key="2"/>
<accession>P15326</accession>
<organism>
    <name type="scientific">Coix lacryma-jobi</name>
    <name type="common">Job's tears</name>
    <dbReference type="NCBI Taxonomy" id="4505"/>
    <lineage>
        <taxon>Eukaryota</taxon>
        <taxon>Viridiplantae</taxon>
        <taxon>Streptophyta</taxon>
        <taxon>Embryophyta</taxon>
        <taxon>Tracheophyta</taxon>
        <taxon>Spermatophyta</taxon>
        <taxon>Magnoliopsida</taxon>
        <taxon>Liliopsida</taxon>
        <taxon>Poales</taxon>
        <taxon>Poaceae</taxon>
        <taxon>PACMAD clade</taxon>
        <taxon>Panicoideae</taxon>
        <taxon>Andropogonodae</taxon>
        <taxon>Andropogoneae</taxon>
        <taxon>Rottboelliinae</taxon>
        <taxon>Coix</taxon>
    </lineage>
</organism>
<name>IAMY_COILA</name>
<dbReference type="EC" id="3.2.1.14"/>
<dbReference type="CAZy" id="GH19">
    <property type="family name" value="Glycoside Hydrolase Family 19"/>
</dbReference>
<dbReference type="GO" id="GO:0015066">
    <property type="term" value="F:alpha-amylase inhibitor activity"/>
    <property type="evidence" value="ECO:0007669"/>
    <property type="project" value="UniProtKB-KW"/>
</dbReference>
<dbReference type="GO" id="GO:0008061">
    <property type="term" value="F:chitin binding"/>
    <property type="evidence" value="ECO:0007669"/>
    <property type="project" value="UniProtKB-KW"/>
</dbReference>
<dbReference type="GO" id="GO:0008843">
    <property type="term" value="F:endochitinase activity"/>
    <property type="evidence" value="ECO:0007669"/>
    <property type="project" value="UniProtKB-EC"/>
</dbReference>
<dbReference type="GO" id="GO:0016998">
    <property type="term" value="P:cell wall macromolecule catabolic process"/>
    <property type="evidence" value="ECO:0007669"/>
    <property type="project" value="InterPro"/>
</dbReference>
<dbReference type="GO" id="GO:0006032">
    <property type="term" value="P:chitin catabolic process"/>
    <property type="evidence" value="ECO:0007669"/>
    <property type="project" value="UniProtKB-KW"/>
</dbReference>
<dbReference type="GO" id="GO:0000272">
    <property type="term" value="P:polysaccharide catabolic process"/>
    <property type="evidence" value="ECO:0007669"/>
    <property type="project" value="UniProtKB-KW"/>
</dbReference>
<dbReference type="CDD" id="cd00325">
    <property type="entry name" value="chitinase_GH19"/>
    <property type="match status" value="1"/>
</dbReference>
<dbReference type="FunFam" id="3.30.20.10:FF:000001">
    <property type="entry name" value="Endochitinase (Chitinase)"/>
    <property type="match status" value="1"/>
</dbReference>
<dbReference type="Gene3D" id="1.10.530.10">
    <property type="match status" value="1"/>
</dbReference>
<dbReference type="Gene3D" id="3.30.20.10">
    <property type="entry name" value="Endochitinase, domain 2"/>
    <property type="match status" value="1"/>
</dbReference>
<dbReference type="InterPro" id="IPR000726">
    <property type="entry name" value="Glyco_hydro_19_cat"/>
</dbReference>
<dbReference type="InterPro" id="IPR023346">
    <property type="entry name" value="Lysozyme-like_dom_sf"/>
</dbReference>
<dbReference type="PANTHER" id="PTHR22595:SF197">
    <property type="entry name" value="CHITINASE FAMILY PROTEIN"/>
    <property type="match status" value="1"/>
</dbReference>
<dbReference type="PANTHER" id="PTHR22595">
    <property type="entry name" value="CHITINASE-RELATED"/>
    <property type="match status" value="1"/>
</dbReference>
<dbReference type="Pfam" id="PF00182">
    <property type="entry name" value="Glyco_hydro_19"/>
    <property type="match status" value="1"/>
</dbReference>
<dbReference type="SUPFAM" id="SSF53955">
    <property type="entry name" value="Lysozyme-like"/>
    <property type="match status" value="1"/>
</dbReference>
<reference key="1">
    <citation type="journal article" date="1989" name="Biochim. Biophys. Acta">
        <title>Purification and characterization of an insect alpha-amylase inhibitor/endochitinase from seeds of Job's Tears (Coix lachryma-jobi).</title>
        <authorList>
            <person name="Ary M.B."/>
            <person name="Richardson M."/>
            <person name="Shewry P.R."/>
        </authorList>
    </citation>
    <scope>PROTEIN SEQUENCE</scope>
    <source>
        <tissue>Seed</tissue>
    </source>
</reference>
<comment type="function">
    <text>This protein functions both as an alpha-amylase inhibitor and as a chitinase.</text>
</comment>
<comment type="catalytic activity">
    <reaction>
        <text>Random endo-hydrolysis of N-acetyl-beta-D-glucosaminide (1-&gt;4)-beta-linkages in chitin and chitodextrins.</text>
        <dbReference type="EC" id="3.2.1.14"/>
    </reaction>
</comment>
<comment type="similarity">
    <text evidence="2">Belongs to the glycosyl hydrolase 19 family. Chitinase class I subfamily.</text>
</comment>